<sequence length="128" mass="14227">MSFEEKVESLHPAIFEQLSSEFEQQIEVIDCENITIDTSHITAALSIQAFVTTMIIVATQLVIADEDLADAVASEILILDSSQIKKRTIIKIINSRNIKITLSADEIITFVQILLQVLNSILSELDVL</sequence>
<reference key="1">
    <citation type="journal article" date="1993" name="J. Bacteriol.">
        <title>Cloning and characterization of a cluster of genes encoding polypeptides present in the insoluble fraction of the spore coat of Bacillus subtilis.</title>
        <authorList>
            <person name="Zhang J."/>
            <person name="Fitz-James P.C."/>
            <person name="Aronson A.I."/>
        </authorList>
    </citation>
    <scope>NUCLEOTIDE SEQUENCE [GENOMIC DNA]</scope>
    <source>
        <strain>168 / JH642</strain>
    </source>
</reference>
<reference key="2">
    <citation type="journal article" date="1997" name="Nature">
        <title>The complete genome sequence of the Gram-positive bacterium Bacillus subtilis.</title>
        <authorList>
            <person name="Kunst F."/>
            <person name="Ogasawara N."/>
            <person name="Moszer I."/>
            <person name="Albertini A.M."/>
            <person name="Alloni G."/>
            <person name="Azevedo V."/>
            <person name="Bertero M.G."/>
            <person name="Bessieres P."/>
            <person name="Bolotin A."/>
            <person name="Borchert S."/>
            <person name="Borriss R."/>
            <person name="Boursier L."/>
            <person name="Brans A."/>
            <person name="Braun M."/>
            <person name="Brignell S.C."/>
            <person name="Bron S."/>
            <person name="Brouillet S."/>
            <person name="Bruschi C.V."/>
            <person name="Caldwell B."/>
            <person name="Capuano V."/>
            <person name="Carter N.M."/>
            <person name="Choi S.-K."/>
            <person name="Codani J.-J."/>
            <person name="Connerton I.F."/>
            <person name="Cummings N.J."/>
            <person name="Daniel R.A."/>
            <person name="Denizot F."/>
            <person name="Devine K.M."/>
            <person name="Duesterhoeft A."/>
            <person name="Ehrlich S.D."/>
            <person name="Emmerson P.T."/>
            <person name="Entian K.-D."/>
            <person name="Errington J."/>
            <person name="Fabret C."/>
            <person name="Ferrari E."/>
            <person name="Foulger D."/>
            <person name="Fritz C."/>
            <person name="Fujita M."/>
            <person name="Fujita Y."/>
            <person name="Fuma S."/>
            <person name="Galizzi A."/>
            <person name="Galleron N."/>
            <person name="Ghim S.-Y."/>
            <person name="Glaser P."/>
            <person name="Goffeau A."/>
            <person name="Golightly E.J."/>
            <person name="Grandi G."/>
            <person name="Guiseppi G."/>
            <person name="Guy B.J."/>
            <person name="Haga K."/>
            <person name="Haiech J."/>
            <person name="Harwood C.R."/>
            <person name="Henaut A."/>
            <person name="Hilbert H."/>
            <person name="Holsappel S."/>
            <person name="Hosono S."/>
            <person name="Hullo M.-F."/>
            <person name="Itaya M."/>
            <person name="Jones L.-M."/>
            <person name="Joris B."/>
            <person name="Karamata D."/>
            <person name="Kasahara Y."/>
            <person name="Klaerr-Blanchard M."/>
            <person name="Klein C."/>
            <person name="Kobayashi Y."/>
            <person name="Koetter P."/>
            <person name="Koningstein G."/>
            <person name="Krogh S."/>
            <person name="Kumano M."/>
            <person name="Kurita K."/>
            <person name="Lapidus A."/>
            <person name="Lardinois S."/>
            <person name="Lauber J."/>
            <person name="Lazarevic V."/>
            <person name="Lee S.-M."/>
            <person name="Levine A."/>
            <person name="Liu H."/>
            <person name="Masuda S."/>
            <person name="Mauel C."/>
            <person name="Medigue C."/>
            <person name="Medina N."/>
            <person name="Mellado R.P."/>
            <person name="Mizuno M."/>
            <person name="Moestl D."/>
            <person name="Nakai S."/>
            <person name="Noback M."/>
            <person name="Noone D."/>
            <person name="O'Reilly M."/>
            <person name="Ogawa K."/>
            <person name="Ogiwara A."/>
            <person name="Oudega B."/>
            <person name="Park S.-H."/>
            <person name="Parro V."/>
            <person name="Pohl T.M."/>
            <person name="Portetelle D."/>
            <person name="Porwollik S."/>
            <person name="Prescott A.M."/>
            <person name="Presecan E."/>
            <person name="Pujic P."/>
            <person name="Purnelle B."/>
            <person name="Rapoport G."/>
            <person name="Rey M."/>
            <person name="Reynolds S."/>
            <person name="Rieger M."/>
            <person name="Rivolta C."/>
            <person name="Rocha E."/>
            <person name="Roche B."/>
            <person name="Rose M."/>
            <person name="Sadaie Y."/>
            <person name="Sato T."/>
            <person name="Scanlan E."/>
            <person name="Schleich S."/>
            <person name="Schroeter R."/>
            <person name="Scoffone F."/>
            <person name="Sekiguchi J."/>
            <person name="Sekowska A."/>
            <person name="Seror S.J."/>
            <person name="Serror P."/>
            <person name="Shin B.-S."/>
            <person name="Soldo B."/>
            <person name="Sorokin A."/>
            <person name="Tacconi E."/>
            <person name="Takagi T."/>
            <person name="Takahashi H."/>
            <person name="Takemaru K."/>
            <person name="Takeuchi M."/>
            <person name="Tamakoshi A."/>
            <person name="Tanaka T."/>
            <person name="Terpstra P."/>
            <person name="Tognoni A."/>
            <person name="Tosato V."/>
            <person name="Uchiyama S."/>
            <person name="Vandenbol M."/>
            <person name="Vannier F."/>
            <person name="Vassarotti A."/>
            <person name="Viari A."/>
            <person name="Wambutt R."/>
            <person name="Wedler E."/>
            <person name="Wedler H."/>
            <person name="Weitzenegger T."/>
            <person name="Winters P."/>
            <person name="Wipat A."/>
            <person name="Yamamoto H."/>
            <person name="Yamane K."/>
            <person name="Yasumoto K."/>
            <person name="Yata K."/>
            <person name="Yoshida K."/>
            <person name="Yoshikawa H.-F."/>
            <person name="Zumstein E."/>
            <person name="Yoshikawa H."/>
            <person name="Danchin A."/>
        </authorList>
    </citation>
    <scope>NUCLEOTIDE SEQUENCE [LARGE SCALE GENOMIC DNA]</scope>
    <source>
        <strain>168</strain>
    </source>
</reference>
<protein>
    <recommendedName>
        <fullName>Spore coat protein V</fullName>
    </recommendedName>
</protein>
<feature type="chain" id="PRO_0000079270" description="Spore coat protein V">
    <location>
        <begin position="1"/>
        <end position="128"/>
    </location>
</feature>
<gene>
    <name type="primary">cotV</name>
    <name type="ordered locus">BSU11780</name>
</gene>
<keyword id="KW-1185">Reference proteome</keyword>
<keyword id="KW-0749">Sporulation</keyword>
<proteinExistence type="evidence at protein level"/>
<name>COTV_BACSU</name>
<comment type="interaction">
    <interactant intactId="EBI-6407165">
        <id>Q08309</id>
    </interactant>
    <interactant intactId="EBI-6407159">
        <id>Q08310</id>
        <label>cotW</label>
    </interactant>
    <organismsDiffer>false</organismsDiffer>
    <experiments>3</experiments>
</comment>
<dbReference type="EMBL" id="L10116">
    <property type="protein sequence ID" value="AAA22325.1"/>
    <property type="molecule type" value="Genomic_DNA"/>
</dbReference>
<dbReference type="EMBL" id="AL009126">
    <property type="protein sequence ID" value="CAB13035.1"/>
    <property type="molecule type" value="Genomic_DNA"/>
</dbReference>
<dbReference type="PIR" id="A47119">
    <property type="entry name" value="A47119"/>
</dbReference>
<dbReference type="RefSeq" id="NP_389060.1">
    <property type="nucleotide sequence ID" value="NC_000964.3"/>
</dbReference>
<dbReference type="RefSeq" id="WP_003244871.1">
    <property type="nucleotide sequence ID" value="NZ_OZ025638.1"/>
</dbReference>
<dbReference type="FunCoup" id="Q08309">
    <property type="interactions" value="56"/>
</dbReference>
<dbReference type="IntAct" id="Q08309">
    <property type="interactions" value="1"/>
</dbReference>
<dbReference type="STRING" id="224308.BSU11780"/>
<dbReference type="PaxDb" id="224308-BSU11780"/>
<dbReference type="DNASU" id="939385"/>
<dbReference type="EnsemblBacteria" id="CAB13035">
    <property type="protein sequence ID" value="CAB13035"/>
    <property type="gene ID" value="BSU_11780"/>
</dbReference>
<dbReference type="GeneID" id="939385"/>
<dbReference type="KEGG" id="bsu:BSU11780"/>
<dbReference type="PATRIC" id="fig|224308.179.peg.1267"/>
<dbReference type="eggNOG" id="ENOG5030CMA">
    <property type="taxonomic scope" value="Bacteria"/>
</dbReference>
<dbReference type="InParanoid" id="Q08309"/>
<dbReference type="OrthoDB" id="2937099at2"/>
<dbReference type="BioCyc" id="BSUB:BSU11780-MONOMER"/>
<dbReference type="Proteomes" id="UP000001570">
    <property type="component" value="Chromosome"/>
</dbReference>
<dbReference type="GO" id="GO:0031160">
    <property type="term" value="C:spore wall"/>
    <property type="evidence" value="ECO:0007669"/>
    <property type="project" value="InterPro"/>
</dbReference>
<dbReference type="GO" id="GO:0030435">
    <property type="term" value="P:sporulation resulting in formation of a cellular spore"/>
    <property type="evidence" value="ECO:0007669"/>
    <property type="project" value="UniProtKB-KW"/>
</dbReference>
<dbReference type="InterPro" id="IPR011428">
    <property type="entry name" value="Spore_coat_X/V"/>
</dbReference>
<dbReference type="Pfam" id="PF07552">
    <property type="entry name" value="Coat_X"/>
    <property type="match status" value="1"/>
</dbReference>
<accession>Q08309</accession>
<organism>
    <name type="scientific">Bacillus subtilis (strain 168)</name>
    <dbReference type="NCBI Taxonomy" id="224308"/>
    <lineage>
        <taxon>Bacteria</taxon>
        <taxon>Bacillati</taxon>
        <taxon>Bacillota</taxon>
        <taxon>Bacilli</taxon>
        <taxon>Bacillales</taxon>
        <taxon>Bacillaceae</taxon>
        <taxon>Bacillus</taxon>
    </lineage>
</organism>